<organism>
    <name type="scientific">Vibrio vulnificus (strain CMCP6)</name>
    <dbReference type="NCBI Taxonomy" id="216895"/>
    <lineage>
        <taxon>Bacteria</taxon>
        <taxon>Pseudomonadati</taxon>
        <taxon>Pseudomonadota</taxon>
        <taxon>Gammaproteobacteria</taxon>
        <taxon>Vibrionales</taxon>
        <taxon>Vibrionaceae</taxon>
        <taxon>Vibrio</taxon>
    </lineage>
</organism>
<name>RS4_VIBVU</name>
<evidence type="ECO:0000255" key="1">
    <source>
        <dbReference type="HAMAP-Rule" id="MF_01306"/>
    </source>
</evidence>
<evidence type="ECO:0000305" key="2"/>
<gene>
    <name evidence="1" type="primary">rpsD</name>
    <name type="ordered locus">VV1_0737</name>
</gene>
<protein>
    <recommendedName>
        <fullName evidence="1">Small ribosomal subunit protein uS4</fullName>
    </recommendedName>
    <alternativeName>
        <fullName evidence="2">30S ribosomal protein S4</fullName>
    </alternativeName>
</protein>
<accession>Q8DE62</accession>
<sequence>MARYLGPKLKLSRREGTDLFLKSGVRAIDTKCKIDNAPGVHGARRGRLSEYGVQLREKQKVRRMYGVLEKQFRNYYAEAARLKGNTGENLLQLLEGRLDNVVYRMGFGATRAEARQLVSHKAILVNGKVVNVPSFKVAANDVVSIREKAKQQTRIKAALEVAEQREKPTWIEVDAGKMEGTFKRMPERSDLSADINEQLIVELYSK</sequence>
<reference key="1">
    <citation type="submission" date="2002-12" db="EMBL/GenBank/DDBJ databases">
        <title>Complete genome sequence of Vibrio vulnificus CMCP6.</title>
        <authorList>
            <person name="Rhee J.H."/>
            <person name="Kim S.Y."/>
            <person name="Chung S.S."/>
            <person name="Kim J.J."/>
            <person name="Moon Y.H."/>
            <person name="Jeong H."/>
            <person name="Choy H.E."/>
        </authorList>
    </citation>
    <scope>NUCLEOTIDE SEQUENCE [LARGE SCALE GENOMIC DNA]</scope>
    <source>
        <strain>CMCP6</strain>
    </source>
</reference>
<dbReference type="EMBL" id="AE016795">
    <property type="protein sequence ID" value="AAO09246.1"/>
    <property type="molecule type" value="Genomic_DNA"/>
</dbReference>
<dbReference type="RefSeq" id="WP_011078811.1">
    <property type="nucleotide sequence ID" value="NC_004459.3"/>
</dbReference>
<dbReference type="SMR" id="Q8DE62"/>
<dbReference type="GeneID" id="93895042"/>
<dbReference type="KEGG" id="vvu:VV1_0737"/>
<dbReference type="HOGENOM" id="CLU_092403_0_2_6"/>
<dbReference type="Proteomes" id="UP000002275">
    <property type="component" value="Chromosome 1"/>
</dbReference>
<dbReference type="GO" id="GO:0015935">
    <property type="term" value="C:small ribosomal subunit"/>
    <property type="evidence" value="ECO:0007669"/>
    <property type="project" value="InterPro"/>
</dbReference>
<dbReference type="GO" id="GO:0019843">
    <property type="term" value="F:rRNA binding"/>
    <property type="evidence" value="ECO:0007669"/>
    <property type="project" value="UniProtKB-UniRule"/>
</dbReference>
<dbReference type="GO" id="GO:0003735">
    <property type="term" value="F:structural constituent of ribosome"/>
    <property type="evidence" value="ECO:0007669"/>
    <property type="project" value="InterPro"/>
</dbReference>
<dbReference type="GO" id="GO:0042274">
    <property type="term" value="P:ribosomal small subunit biogenesis"/>
    <property type="evidence" value="ECO:0007669"/>
    <property type="project" value="TreeGrafter"/>
</dbReference>
<dbReference type="GO" id="GO:0006412">
    <property type="term" value="P:translation"/>
    <property type="evidence" value="ECO:0007669"/>
    <property type="project" value="UniProtKB-UniRule"/>
</dbReference>
<dbReference type="CDD" id="cd00165">
    <property type="entry name" value="S4"/>
    <property type="match status" value="1"/>
</dbReference>
<dbReference type="FunFam" id="1.10.1050.10:FF:000001">
    <property type="entry name" value="30S ribosomal protein S4"/>
    <property type="match status" value="1"/>
</dbReference>
<dbReference type="FunFam" id="3.10.290.10:FF:000001">
    <property type="entry name" value="30S ribosomal protein S4"/>
    <property type="match status" value="1"/>
</dbReference>
<dbReference type="Gene3D" id="1.10.1050.10">
    <property type="entry name" value="Ribosomal Protein S4 Delta 41, Chain A, domain 1"/>
    <property type="match status" value="1"/>
</dbReference>
<dbReference type="Gene3D" id="3.10.290.10">
    <property type="entry name" value="RNA-binding S4 domain"/>
    <property type="match status" value="1"/>
</dbReference>
<dbReference type="HAMAP" id="MF_01306_B">
    <property type="entry name" value="Ribosomal_uS4_B"/>
    <property type="match status" value="1"/>
</dbReference>
<dbReference type="InterPro" id="IPR022801">
    <property type="entry name" value="Ribosomal_uS4"/>
</dbReference>
<dbReference type="InterPro" id="IPR005709">
    <property type="entry name" value="Ribosomal_uS4_bac-type"/>
</dbReference>
<dbReference type="InterPro" id="IPR018079">
    <property type="entry name" value="Ribosomal_uS4_CS"/>
</dbReference>
<dbReference type="InterPro" id="IPR001912">
    <property type="entry name" value="Ribosomal_uS4_N"/>
</dbReference>
<dbReference type="InterPro" id="IPR002942">
    <property type="entry name" value="S4_RNA-bd"/>
</dbReference>
<dbReference type="InterPro" id="IPR036986">
    <property type="entry name" value="S4_RNA-bd_sf"/>
</dbReference>
<dbReference type="NCBIfam" id="NF003717">
    <property type="entry name" value="PRK05327.1"/>
    <property type="match status" value="1"/>
</dbReference>
<dbReference type="NCBIfam" id="TIGR01017">
    <property type="entry name" value="rpsD_bact"/>
    <property type="match status" value="1"/>
</dbReference>
<dbReference type="PANTHER" id="PTHR11831">
    <property type="entry name" value="30S 40S RIBOSOMAL PROTEIN"/>
    <property type="match status" value="1"/>
</dbReference>
<dbReference type="PANTHER" id="PTHR11831:SF4">
    <property type="entry name" value="SMALL RIBOSOMAL SUBUNIT PROTEIN US4M"/>
    <property type="match status" value="1"/>
</dbReference>
<dbReference type="Pfam" id="PF00163">
    <property type="entry name" value="Ribosomal_S4"/>
    <property type="match status" value="1"/>
</dbReference>
<dbReference type="Pfam" id="PF01479">
    <property type="entry name" value="S4"/>
    <property type="match status" value="1"/>
</dbReference>
<dbReference type="SMART" id="SM01390">
    <property type="entry name" value="Ribosomal_S4"/>
    <property type="match status" value="1"/>
</dbReference>
<dbReference type="SMART" id="SM00363">
    <property type="entry name" value="S4"/>
    <property type="match status" value="1"/>
</dbReference>
<dbReference type="SUPFAM" id="SSF55174">
    <property type="entry name" value="Alpha-L RNA-binding motif"/>
    <property type="match status" value="1"/>
</dbReference>
<dbReference type="PROSITE" id="PS00632">
    <property type="entry name" value="RIBOSOMAL_S4"/>
    <property type="match status" value="1"/>
</dbReference>
<dbReference type="PROSITE" id="PS50889">
    <property type="entry name" value="S4"/>
    <property type="match status" value="1"/>
</dbReference>
<proteinExistence type="inferred from homology"/>
<keyword id="KW-0687">Ribonucleoprotein</keyword>
<keyword id="KW-0689">Ribosomal protein</keyword>
<keyword id="KW-0694">RNA-binding</keyword>
<keyword id="KW-0699">rRNA-binding</keyword>
<comment type="function">
    <text evidence="1">One of the primary rRNA binding proteins, it binds directly to 16S rRNA where it nucleates assembly of the body of the 30S subunit.</text>
</comment>
<comment type="function">
    <text evidence="1">With S5 and S12 plays an important role in translational accuracy.</text>
</comment>
<comment type="subunit">
    <text evidence="1">Part of the 30S ribosomal subunit. Contacts protein S5. The interaction surface between S4 and S5 is involved in control of translational fidelity.</text>
</comment>
<comment type="similarity">
    <text evidence="1">Belongs to the universal ribosomal protein uS4 family.</text>
</comment>
<feature type="chain" id="PRO_0000132492" description="Small ribosomal subunit protein uS4">
    <location>
        <begin position="1"/>
        <end position="206"/>
    </location>
</feature>
<feature type="domain" description="S4 RNA-binding" evidence="1">
    <location>
        <begin position="96"/>
        <end position="158"/>
    </location>
</feature>